<evidence type="ECO:0000255" key="1">
    <source>
        <dbReference type="HAMAP-Rule" id="MF_01342"/>
    </source>
</evidence>
<evidence type="ECO:0000305" key="2"/>
<proteinExistence type="inferred from homology"/>
<comment type="function">
    <text evidence="1">Binds 23S rRNA and is also seen to make contacts with the A and possibly P site tRNAs.</text>
</comment>
<comment type="subunit">
    <text evidence="1">Part of the 50S ribosomal subunit.</text>
</comment>
<comment type="similarity">
    <text evidence="1">Belongs to the universal ribosomal protein uL16 family.</text>
</comment>
<reference key="1">
    <citation type="submission" date="2007-05" db="EMBL/GenBank/DDBJ databases">
        <title>Complete sequence of chromosome of Psychrobacter sp. PRwf-1.</title>
        <authorList>
            <consortium name="US DOE Joint Genome Institute"/>
            <person name="Copeland A."/>
            <person name="Lucas S."/>
            <person name="Lapidus A."/>
            <person name="Barry K."/>
            <person name="Detter J.C."/>
            <person name="Glavina del Rio T."/>
            <person name="Hammon N."/>
            <person name="Israni S."/>
            <person name="Dalin E."/>
            <person name="Tice H."/>
            <person name="Pitluck S."/>
            <person name="Chain P."/>
            <person name="Malfatti S."/>
            <person name="Shin M."/>
            <person name="Vergez L."/>
            <person name="Schmutz J."/>
            <person name="Larimer F."/>
            <person name="Land M."/>
            <person name="Hauser L."/>
            <person name="Kyrpides N."/>
            <person name="Kim E."/>
            <person name="Tiedje J."/>
            <person name="Richardson P."/>
        </authorList>
    </citation>
    <scope>NUCLEOTIDE SEQUENCE [LARGE SCALE GENOMIC DNA]</scope>
    <source>
        <strain>PRwf-1</strain>
    </source>
</reference>
<feature type="chain" id="PRO_1000073329" description="Large ribosomal subunit protein uL16">
    <location>
        <begin position="1"/>
        <end position="137"/>
    </location>
</feature>
<sequence length="137" mass="15555">MLQPKRTKFRKMHKGRNTGLAHRGSTVAFGQFGLKSVGRGRMTARQIEAARRTITRKVKRGGKIWIRVFPDKPITNKPLEVRMGKGKGPVEYWVCEIKPGKMLYEIEGVSEELAREAFTLAAAKLPFKTTIVKRTIM</sequence>
<gene>
    <name evidence="1" type="primary">rplP</name>
    <name type="ordered locus">PsycPRwf_0433</name>
</gene>
<organism>
    <name type="scientific">Psychrobacter sp. (strain PRwf-1)</name>
    <dbReference type="NCBI Taxonomy" id="349106"/>
    <lineage>
        <taxon>Bacteria</taxon>
        <taxon>Pseudomonadati</taxon>
        <taxon>Pseudomonadota</taxon>
        <taxon>Gammaproteobacteria</taxon>
        <taxon>Moraxellales</taxon>
        <taxon>Moraxellaceae</taxon>
        <taxon>Psychrobacter</taxon>
    </lineage>
</organism>
<protein>
    <recommendedName>
        <fullName evidence="1">Large ribosomal subunit protein uL16</fullName>
    </recommendedName>
    <alternativeName>
        <fullName evidence="2">50S ribosomal protein L16</fullName>
    </alternativeName>
</protein>
<accession>A5WCJ7</accession>
<keyword id="KW-0687">Ribonucleoprotein</keyword>
<keyword id="KW-0689">Ribosomal protein</keyword>
<keyword id="KW-0694">RNA-binding</keyword>
<keyword id="KW-0699">rRNA-binding</keyword>
<keyword id="KW-0820">tRNA-binding</keyword>
<dbReference type="EMBL" id="CP000713">
    <property type="protein sequence ID" value="ABQ93388.1"/>
    <property type="molecule type" value="Genomic_DNA"/>
</dbReference>
<dbReference type="SMR" id="A5WCJ7"/>
<dbReference type="STRING" id="349106.PsycPRwf_0433"/>
<dbReference type="KEGG" id="prw:PsycPRwf_0433"/>
<dbReference type="eggNOG" id="COG0197">
    <property type="taxonomic scope" value="Bacteria"/>
</dbReference>
<dbReference type="HOGENOM" id="CLU_078858_2_1_6"/>
<dbReference type="GO" id="GO:0022625">
    <property type="term" value="C:cytosolic large ribosomal subunit"/>
    <property type="evidence" value="ECO:0007669"/>
    <property type="project" value="TreeGrafter"/>
</dbReference>
<dbReference type="GO" id="GO:0019843">
    <property type="term" value="F:rRNA binding"/>
    <property type="evidence" value="ECO:0007669"/>
    <property type="project" value="UniProtKB-UniRule"/>
</dbReference>
<dbReference type="GO" id="GO:0003735">
    <property type="term" value="F:structural constituent of ribosome"/>
    <property type="evidence" value="ECO:0007669"/>
    <property type="project" value="InterPro"/>
</dbReference>
<dbReference type="GO" id="GO:0000049">
    <property type="term" value="F:tRNA binding"/>
    <property type="evidence" value="ECO:0007669"/>
    <property type="project" value="UniProtKB-KW"/>
</dbReference>
<dbReference type="GO" id="GO:0006412">
    <property type="term" value="P:translation"/>
    <property type="evidence" value="ECO:0007669"/>
    <property type="project" value="UniProtKB-UniRule"/>
</dbReference>
<dbReference type="CDD" id="cd01433">
    <property type="entry name" value="Ribosomal_L16_L10e"/>
    <property type="match status" value="1"/>
</dbReference>
<dbReference type="FunFam" id="3.90.1170.10:FF:000001">
    <property type="entry name" value="50S ribosomal protein L16"/>
    <property type="match status" value="1"/>
</dbReference>
<dbReference type="Gene3D" id="3.90.1170.10">
    <property type="entry name" value="Ribosomal protein L10e/L16"/>
    <property type="match status" value="1"/>
</dbReference>
<dbReference type="HAMAP" id="MF_01342">
    <property type="entry name" value="Ribosomal_uL16"/>
    <property type="match status" value="1"/>
</dbReference>
<dbReference type="InterPro" id="IPR047873">
    <property type="entry name" value="Ribosomal_uL16"/>
</dbReference>
<dbReference type="InterPro" id="IPR000114">
    <property type="entry name" value="Ribosomal_uL16_bact-type"/>
</dbReference>
<dbReference type="InterPro" id="IPR020798">
    <property type="entry name" value="Ribosomal_uL16_CS"/>
</dbReference>
<dbReference type="InterPro" id="IPR016180">
    <property type="entry name" value="Ribosomal_uL16_dom"/>
</dbReference>
<dbReference type="InterPro" id="IPR036920">
    <property type="entry name" value="Ribosomal_uL16_sf"/>
</dbReference>
<dbReference type="NCBIfam" id="TIGR01164">
    <property type="entry name" value="rplP_bact"/>
    <property type="match status" value="1"/>
</dbReference>
<dbReference type="PANTHER" id="PTHR12220">
    <property type="entry name" value="50S/60S RIBOSOMAL PROTEIN L16"/>
    <property type="match status" value="1"/>
</dbReference>
<dbReference type="PANTHER" id="PTHR12220:SF13">
    <property type="entry name" value="LARGE RIBOSOMAL SUBUNIT PROTEIN UL16M"/>
    <property type="match status" value="1"/>
</dbReference>
<dbReference type="Pfam" id="PF00252">
    <property type="entry name" value="Ribosomal_L16"/>
    <property type="match status" value="1"/>
</dbReference>
<dbReference type="PRINTS" id="PR00060">
    <property type="entry name" value="RIBOSOMALL16"/>
</dbReference>
<dbReference type="SUPFAM" id="SSF54686">
    <property type="entry name" value="Ribosomal protein L16p/L10e"/>
    <property type="match status" value="1"/>
</dbReference>
<dbReference type="PROSITE" id="PS00586">
    <property type="entry name" value="RIBOSOMAL_L16_1"/>
    <property type="match status" value="1"/>
</dbReference>
<dbReference type="PROSITE" id="PS00701">
    <property type="entry name" value="RIBOSOMAL_L16_2"/>
    <property type="match status" value="1"/>
</dbReference>
<name>RL16_PSYWF</name>